<comment type="function">
    <text evidence="1">Component of the dark-operative protochlorophyllide reductase (DPOR) that uses Mg-ATP and reduced ferredoxin to reduce ring D of protochlorophyllide (Pchlide) to form chlorophyllide a (Chlide). This reaction is light-independent. The NB-protein (ChlN-ChlB) is the catalytic component of the complex.</text>
</comment>
<comment type="catalytic activity">
    <reaction evidence="1">
        <text>chlorophyllide a + oxidized 2[4Fe-4S]-[ferredoxin] + 2 ADP + 2 phosphate = protochlorophyllide a + reduced 2[4Fe-4S]-[ferredoxin] + 2 ATP + 2 H2O</text>
        <dbReference type="Rhea" id="RHEA:28202"/>
        <dbReference type="Rhea" id="RHEA-COMP:10002"/>
        <dbReference type="Rhea" id="RHEA-COMP:10004"/>
        <dbReference type="ChEBI" id="CHEBI:15377"/>
        <dbReference type="ChEBI" id="CHEBI:30616"/>
        <dbReference type="ChEBI" id="CHEBI:33722"/>
        <dbReference type="ChEBI" id="CHEBI:33723"/>
        <dbReference type="ChEBI" id="CHEBI:43474"/>
        <dbReference type="ChEBI" id="CHEBI:83348"/>
        <dbReference type="ChEBI" id="CHEBI:83350"/>
        <dbReference type="ChEBI" id="CHEBI:456216"/>
        <dbReference type="EC" id="1.3.7.7"/>
    </reaction>
</comment>
<comment type="cofactor">
    <cofactor evidence="1">
        <name>[4Fe-4S] cluster</name>
        <dbReference type="ChEBI" id="CHEBI:49883"/>
    </cofactor>
    <text evidence="1">Binds 1 [4Fe-4S] cluster per heterodimer. The cluster is bound at the heterodimer interface by residues from both subunits.</text>
</comment>
<comment type="pathway">
    <text evidence="1">Porphyrin-containing compound metabolism; chlorophyll biosynthesis (light-independent).</text>
</comment>
<comment type="subunit">
    <text evidence="1">Protochlorophyllide reductase is composed of three subunits; ChlL, ChlN and ChlB. Forms a heterotetramer of two ChlB and two ChlN subunits.</text>
</comment>
<comment type="similarity">
    <text evidence="1">Belongs to the BchN/ChlN family.</text>
</comment>
<keyword id="KW-0004">4Fe-4S</keyword>
<keyword id="KW-0067">ATP-binding</keyword>
<keyword id="KW-0149">Chlorophyll biosynthesis</keyword>
<keyword id="KW-0408">Iron</keyword>
<keyword id="KW-0411">Iron-sulfur</keyword>
<keyword id="KW-0479">Metal-binding</keyword>
<keyword id="KW-0547">Nucleotide-binding</keyword>
<keyword id="KW-0560">Oxidoreductase</keyword>
<keyword id="KW-0602">Photosynthesis</keyword>
<proteinExistence type="inferred from homology"/>
<evidence type="ECO:0000255" key="1">
    <source>
        <dbReference type="HAMAP-Rule" id="MF_00352"/>
    </source>
</evidence>
<name>CHLN_PROM2</name>
<organism>
    <name type="scientific">Prochlorococcus marinus (strain MIT 9215)</name>
    <dbReference type="NCBI Taxonomy" id="93060"/>
    <lineage>
        <taxon>Bacteria</taxon>
        <taxon>Bacillati</taxon>
        <taxon>Cyanobacteriota</taxon>
        <taxon>Cyanophyceae</taxon>
        <taxon>Synechococcales</taxon>
        <taxon>Prochlorococcaceae</taxon>
        <taxon>Prochlorococcus</taxon>
    </lineage>
</organism>
<gene>
    <name evidence="1" type="primary">chlN</name>
    <name type="ordered locus">P9215_06261</name>
</gene>
<protein>
    <recommendedName>
        <fullName evidence="1">Light-independent protochlorophyllide reductase subunit N</fullName>
        <shortName evidence="1">DPOR subunit N</shortName>
        <shortName evidence="1">LI-POR subunit N</shortName>
        <ecNumber evidence="1">1.3.7.7</ecNumber>
    </recommendedName>
</protein>
<feature type="chain" id="PRO_0000324010" description="Light-independent protochlorophyllide reductase subunit N">
    <location>
        <begin position="1"/>
        <end position="418"/>
    </location>
</feature>
<feature type="binding site" evidence="1">
    <location>
        <position position="17"/>
    </location>
    <ligand>
        <name>[4Fe-4S] cluster</name>
        <dbReference type="ChEBI" id="CHEBI:49883"/>
        <note>ligand shared with heterodimeric partner</note>
    </ligand>
</feature>
<feature type="binding site" evidence="1">
    <location>
        <position position="42"/>
    </location>
    <ligand>
        <name>[4Fe-4S] cluster</name>
        <dbReference type="ChEBI" id="CHEBI:49883"/>
        <note>ligand shared with heterodimeric partner</note>
    </ligand>
</feature>
<feature type="binding site" evidence="1">
    <location>
        <position position="103"/>
    </location>
    <ligand>
        <name>[4Fe-4S] cluster</name>
        <dbReference type="ChEBI" id="CHEBI:49883"/>
        <note>ligand shared with heterodimeric partner</note>
    </ligand>
</feature>
<sequence length="418" mass="46507">MSKVEFNKETGPREVFCGLTSIVWLHRRMPDAFFLVVGSRTCAHLIQSAAGVMIFAEPRFGTAILEEKDLAGLADAHEELDRVVNDLISRRPEIKTLFLVGSCPSEVIKLDLATVAEKLNKRFLGKIKFVNYSGSGIETTFTQGEDGALKALIPLMEDSNEEKLLLVGTLANNVEDRFKKIFRNLGISNVESFPPRQSTELPKIGKNTKVLLTQPYLSDTVRDLKHRGCEIISAPFPLGIEGSTKWFLAAAKAFKISALKVHEIISPLISRAKLALESHKDILKGKRLFLLPESQLEISLARFLHNECEMDLIEIGTPYLNKDLMKEEINLLPDNTKIVEGQHVEKQLDRVREANPDLVVCGMGLANPLEAEGISTKWSIEMVFSPIHGIDQAADLAGLFSKPLRRNQILTSKTLVTN</sequence>
<accession>A8G3R0</accession>
<reference key="1">
    <citation type="journal article" date="2007" name="PLoS Genet.">
        <title>Patterns and implications of gene gain and loss in the evolution of Prochlorococcus.</title>
        <authorList>
            <person name="Kettler G.C."/>
            <person name="Martiny A.C."/>
            <person name="Huang K."/>
            <person name="Zucker J."/>
            <person name="Coleman M.L."/>
            <person name="Rodrigue S."/>
            <person name="Chen F."/>
            <person name="Lapidus A."/>
            <person name="Ferriera S."/>
            <person name="Johnson J."/>
            <person name="Steglich C."/>
            <person name="Church G.M."/>
            <person name="Richardson P."/>
            <person name="Chisholm S.W."/>
        </authorList>
    </citation>
    <scope>NUCLEOTIDE SEQUENCE [LARGE SCALE GENOMIC DNA]</scope>
    <source>
        <strain>MIT 9215</strain>
    </source>
</reference>
<dbReference type="EC" id="1.3.7.7" evidence="1"/>
<dbReference type="EMBL" id="CP000825">
    <property type="protein sequence ID" value="ABV50241.1"/>
    <property type="molecule type" value="Genomic_DNA"/>
</dbReference>
<dbReference type="RefSeq" id="WP_012007366.1">
    <property type="nucleotide sequence ID" value="NC_009840.1"/>
</dbReference>
<dbReference type="SMR" id="A8G3R0"/>
<dbReference type="STRING" id="93060.P9215_06261"/>
<dbReference type="KEGG" id="pmh:P9215_06261"/>
<dbReference type="eggNOG" id="COG2710">
    <property type="taxonomic scope" value="Bacteria"/>
</dbReference>
<dbReference type="HOGENOM" id="CLU_037170_0_0_3"/>
<dbReference type="OrthoDB" id="5714774at2"/>
<dbReference type="UniPathway" id="UPA00670"/>
<dbReference type="Proteomes" id="UP000002014">
    <property type="component" value="Chromosome"/>
</dbReference>
<dbReference type="GO" id="GO:0051539">
    <property type="term" value="F:4 iron, 4 sulfur cluster binding"/>
    <property type="evidence" value="ECO:0007669"/>
    <property type="project" value="UniProtKB-UniRule"/>
</dbReference>
<dbReference type="GO" id="GO:0005524">
    <property type="term" value="F:ATP binding"/>
    <property type="evidence" value="ECO:0007669"/>
    <property type="project" value="UniProtKB-UniRule"/>
</dbReference>
<dbReference type="GO" id="GO:0046872">
    <property type="term" value="F:metal ion binding"/>
    <property type="evidence" value="ECO:0007669"/>
    <property type="project" value="UniProtKB-KW"/>
</dbReference>
<dbReference type="GO" id="GO:0016730">
    <property type="term" value="F:oxidoreductase activity, acting on iron-sulfur proteins as donors"/>
    <property type="evidence" value="ECO:0007669"/>
    <property type="project" value="InterPro"/>
</dbReference>
<dbReference type="GO" id="GO:0016636">
    <property type="term" value="F:oxidoreductase activity, acting on the CH-CH group of donors, iron-sulfur protein as acceptor"/>
    <property type="evidence" value="ECO:0007669"/>
    <property type="project" value="UniProtKB-UniRule"/>
</dbReference>
<dbReference type="GO" id="GO:0036068">
    <property type="term" value="P:light-independent chlorophyll biosynthetic process"/>
    <property type="evidence" value="ECO:0007669"/>
    <property type="project" value="UniProtKB-UniRule"/>
</dbReference>
<dbReference type="GO" id="GO:0019685">
    <property type="term" value="P:photosynthesis, dark reaction"/>
    <property type="evidence" value="ECO:0007669"/>
    <property type="project" value="InterPro"/>
</dbReference>
<dbReference type="Gene3D" id="3.40.50.1980">
    <property type="entry name" value="Nitrogenase molybdenum iron protein domain"/>
    <property type="match status" value="3"/>
</dbReference>
<dbReference type="HAMAP" id="MF_00352">
    <property type="entry name" value="ChlN_BchN"/>
    <property type="match status" value="1"/>
</dbReference>
<dbReference type="InterPro" id="IPR050293">
    <property type="entry name" value="LIPOR_BchN/ChlN"/>
</dbReference>
<dbReference type="InterPro" id="IPR000510">
    <property type="entry name" value="Nase/OxRdtase_comp1"/>
</dbReference>
<dbReference type="InterPro" id="IPR005970">
    <property type="entry name" value="Protochl_reductN"/>
</dbReference>
<dbReference type="NCBIfam" id="TIGR01279">
    <property type="entry name" value="DPOR_bchN"/>
    <property type="match status" value="1"/>
</dbReference>
<dbReference type="NCBIfam" id="NF002768">
    <property type="entry name" value="PRK02842.1"/>
    <property type="match status" value="1"/>
</dbReference>
<dbReference type="PANTHER" id="PTHR39429">
    <property type="entry name" value="LIGHT-INDEPENDENT PROTOCHLOROPHYLLIDE REDUCTASE SUBUNIT N"/>
    <property type="match status" value="1"/>
</dbReference>
<dbReference type="PANTHER" id="PTHR39429:SF3">
    <property type="entry name" value="LIGHT-INDEPENDENT PROTOCHLOROPHYLLIDE REDUCTASE SUBUNIT N"/>
    <property type="match status" value="1"/>
</dbReference>
<dbReference type="Pfam" id="PF00148">
    <property type="entry name" value="Oxidored_nitro"/>
    <property type="match status" value="1"/>
</dbReference>
<dbReference type="PIRSF" id="PIRSF000162">
    <property type="entry name" value="P_chlorophyll_rd"/>
    <property type="match status" value="1"/>
</dbReference>
<dbReference type="SUPFAM" id="SSF53807">
    <property type="entry name" value="Helical backbone' metal receptor"/>
    <property type="match status" value="1"/>
</dbReference>